<accession>Q91GE3</accession>
<proteinExistence type="inferred from homology"/>
<keyword id="KW-1015">Disulfide bond</keyword>
<keyword id="KW-0325">Glycoprotein</keyword>
<keyword id="KW-0378">Hydrolase</keyword>
<keyword id="KW-0645">Protease</keyword>
<keyword id="KW-1185">Reference proteome</keyword>
<keyword id="KW-0732">Signal</keyword>
<keyword id="KW-0788">Thiol protease</keyword>
<keyword id="KW-0865">Zymogen</keyword>
<dbReference type="EC" id="3.4.22.50"/>
<dbReference type="EMBL" id="AY043265">
    <property type="protein sequence ID" value="AAK85675.1"/>
    <property type="molecule type" value="Genomic_DNA"/>
</dbReference>
<dbReference type="SMR" id="Q91GE3"/>
<dbReference type="MEROPS" id="C01.083"/>
<dbReference type="GlyCosmos" id="Q91GE3">
    <property type="glycosylation" value="1 site, No reported glycans"/>
</dbReference>
<dbReference type="KEGG" id="vg:921832"/>
<dbReference type="OrthoDB" id="4752at10239"/>
<dbReference type="Proteomes" id="UP000203221">
    <property type="component" value="Genome"/>
</dbReference>
<dbReference type="GO" id="GO:0008234">
    <property type="term" value="F:cysteine-type peptidase activity"/>
    <property type="evidence" value="ECO:0007669"/>
    <property type="project" value="UniProtKB-KW"/>
</dbReference>
<dbReference type="GO" id="GO:0006508">
    <property type="term" value="P:proteolysis"/>
    <property type="evidence" value="ECO:0007669"/>
    <property type="project" value="UniProtKB-KW"/>
</dbReference>
<dbReference type="CDD" id="cd02248">
    <property type="entry name" value="Peptidase_C1A"/>
    <property type="match status" value="1"/>
</dbReference>
<dbReference type="Gene3D" id="3.90.70.10">
    <property type="entry name" value="Cysteine proteinases"/>
    <property type="match status" value="1"/>
</dbReference>
<dbReference type="InterPro" id="IPR038765">
    <property type="entry name" value="Papain-like_cys_pep_sf"/>
</dbReference>
<dbReference type="InterPro" id="IPR025661">
    <property type="entry name" value="Pept_asp_AS"/>
</dbReference>
<dbReference type="InterPro" id="IPR000169">
    <property type="entry name" value="Pept_cys_AS"/>
</dbReference>
<dbReference type="InterPro" id="IPR025660">
    <property type="entry name" value="Pept_his_AS"/>
</dbReference>
<dbReference type="InterPro" id="IPR013128">
    <property type="entry name" value="Peptidase_C1A"/>
</dbReference>
<dbReference type="InterPro" id="IPR000668">
    <property type="entry name" value="Peptidase_C1A_C"/>
</dbReference>
<dbReference type="InterPro" id="IPR039417">
    <property type="entry name" value="Peptidase_C1A_papain-like"/>
</dbReference>
<dbReference type="InterPro" id="IPR013201">
    <property type="entry name" value="Prot_inhib_I29"/>
</dbReference>
<dbReference type="PANTHER" id="PTHR12411">
    <property type="entry name" value="CYSTEINE PROTEASE FAMILY C1-RELATED"/>
    <property type="match status" value="1"/>
</dbReference>
<dbReference type="Pfam" id="PF08246">
    <property type="entry name" value="Inhibitor_I29"/>
    <property type="match status" value="1"/>
</dbReference>
<dbReference type="Pfam" id="PF00112">
    <property type="entry name" value="Peptidase_C1"/>
    <property type="match status" value="1"/>
</dbReference>
<dbReference type="PRINTS" id="PR00705">
    <property type="entry name" value="PAPAIN"/>
</dbReference>
<dbReference type="SMART" id="SM00848">
    <property type="entry name" value="Inhibitor_I29"/>
    <property type="match status" value="1"/>
</dbReference>
<dbReference type="SMART" id="SM00645">
    <property type="entry name" value="Pept_C1"/>
    <property type="match status" value="1"/>
</dbReference>
<dbReference type="SUPFAM" id="SSF54001">
    <property type="entry name" value="Cysteine proteinases"/>
    <property type="match status" value="1"/>
</dbReference>
<dbReference type="PROSITE" id="PS00640">
    <property type="entry name" value="THIOL_PROTEASE_ASN"/>
    <property type="match status" value="1"/>
</dbReference>
<dbReference type="PROSITE" id="PS00139">
    <property type="entry name" value="THIOL_PROTEASE_CYS"/>
    <property type="match status" value="1"/>
</dbReference>
<dbReference type="PROSITE" id="PS00639">
    <property type="entry name" value="THIOL_PROTEASE_HIS"/>
    <property type="match status" value="1"/>
</dbReference>
<comment type="function">
    <text evidence="1">Cysteine protease that plays an essential role in host liquefaction to facilitate horizontal transmission of the virus. May participate in the degradation of foreign protein expressed by the baculovirus system (By similarity).</text>
</comment>
<comment type="catalytic activity">
    <reaction>
        <text>Endopeptidase of broad specificity, hydrolyzing substrates of both cathepsin L and cathepsin B.</text>
        <dbReference type="EC" id="3.4.22.50"/>
    </reaction>
</comment>
<comment type="PTM">
    <text evidence="1">Synthesized as an inactive proenzyme and activated by proteolytic removal of the inhibitory propeptide.</text>
</comment>
<comment type="similarity">
    <text evidence="3 4 5">Belongs to the peptidase C1 family.</text>
</comment>
<organismHost>
    <name type="scientific">Lepidoptera</name>
    <name type="common">butterflies and moths</name>
    <dbReference type="NCBI Taxonomy" id="7088"/>
</organismHost>
<organism>
    <name type="scientific">Epiphyas postvittana nucleopolyhedrovirus</name>
    <name type="common">EppoMNPV</name>
    <dbReference type="NCBI Taxonomy" id="70600"/>
    <lineage>
        <taxon>Viruses</taxon>
        <taxon>Viruses incertae sedis</taxon>
        <taxon>Naldaviricetes</taxon>
        <taxon>Lefavirales</taxon>
        <taxon>Baculoviridae</taxon>
        <taxon>Alphabaculovirus</taxon>
        <taxon>Alphabaculovirus eppostvittanae</taxon>
    </lineage>
</organism>
<name>CATV_NPVEP</name>
<feature type="signal peptide" evidence="2">
    <location>
        <begin position="1"/>
        <end position="18"/>
    </location>
</feature>
<feature type="propeptide" id="PRO_0000322209" description="Activation peptide" evidence="2">
    <location>
        <begin position="19"/>
        <end position="112"/>
    </location>
</feature>
<feature type="chain" id="PRO_0000050579" description="Viral cathepsin">
    <location>
        <begin position="113"/>
        <end position="323"/>
    </location>
</feature>
<feature type="active site" evidence="1">
    <location>
        <position position="136"/>
    </location>
</feature>
<feature type="active site" evidence="1">
    <location>
        <position position="269"/>
    </location>
</feature>
<feature type="active site" evidence="1">
    <location>
        <position position="289"/>
    </location>
</feature>
<feature type="glycosylation site" description="N-linked (GlcNAc...) asparagine; by host" evidence="2">
    <location>
        <position position="158"/>
    </location>
</feature>
<feature type="disulfide bond" evidence="1">
    <location>
        <begin position="133"/>
        <end position="174"/>
    </location>
</feature>
<feature type="disulfide bond" evidence="1">
    <location>
        <begin position="167"/>
        <end position="207"/>
    </location>
</feature>
<feature type="disulfide bond" evidence="1">
    <location>
        <begin position="262"/>
        <end position="310"/>
    </location>
</feature>
<evidence type="ECO:0000250" key="1"/>
<evidence type="ECO:0000255" key="2"/>
<evidence type="ECO:0000255" key="3">
    <source>
        <dbReference type="PROSITE-ProRule" id="PRU10088"/>
    </source>
</evidence>
<evidence type="ECO:0000255" key="4">
    <source>
        <dbReference type="PROSITE-ProRule" id="PRU10089"/>
    </source>
</evidence>
<evidence type="ECO:0000255" key="5">
    <source>
        <dbReference type="PROSITE-ProRule" id="PRU10090"/>
    </source>
</evidence>
<protein>
    <recommendedName>
        <fullName>Viral cathepsin</fullName>
        <shortName>V-cath</shortName>
        <ecNumber>3.4.22.50</ecNumber>
    </recommendedName>
    <alternativeName>
        <fullName>Cysteine proteinase</fullName>
        <shortName>CP</shortName>
    </alternativeName>
</protein>
<sequence length="323" mass="36835">MSKFLLYWFVYGVVCSAAYDILKAPNYFEEFVRQYNKQYDSEYEKLRRYKIFQHNLNDIITKNRNDTAVYKINKFSDLSKDETIAKYTGLSLPLHTQNFCEVVVLDRPPGKGPLEFDWRRFNKITSVKNQGMCGACWAFATLASLESQFAIAHDRLINLSEQQMIDCDSVDVGCEGGLLHTAFEAIISMGGVQIENDYPYESSNNYCRMDPTKFVVGVKQCNRYITIYEEKLKDVLRLAGPIPVAIDASDILNYEQGIIKYCANNGLNHAVLLVGYGVENNVPYWILKNSWGTDWGEQGFFKIQQNVNACGIKNELASTAEIN</sequence>
<gene>
    <name type="primary">VCATH</name>
    <name type="synonym">111</name>
</gene>
<reference key="1">
    <citation type="journal article" date="2002" name="J. Gen. Virol.">
        <title>Whole genome analysis of the Epiphyas postvittana nucleopolyhedrovirus.</title>
        <authorList>
            <person name="Hyink O."/>
            <person name="Dellow R.A."/>
            <person name="Olsen M.J."/>
            <person name="Caradoc-Davies K.M.B."/>
            <person name="Drake K."/>
            <person name="Herniou E.A."/>
            <person name="Cory J.S."/>
            <person name="O'Reilly D.R."/>
            <person name="Ward V.K."/>
        </authorList>
    </citation>
    <scope>NUCLEOTIDE SEQUENCE [LARGE SCALE GENOMIC DNA]</scope>
</reference>